<comment type="function">
    <text evidence="1">Picornain 3C-like protease is a thiol protease that cleaves the P1 and P2 polyproteins.</text>
</comment>
<comment type="catalytic activity">
    <reaction evidence="3">
        <text>RNA(n) + a ribonucleoside 5'-triphosphate = RNA(n+1) + diphosphate</text>
        <dbReference type="Rhea" id="RHEA:21248"/>
        <dbReference type="Rhea" id="RHEA-COMP:14527"/>
        <dbReference type="Rhea" id="RHEA-COMP:17342"/>
        <dbReference type="ChEBI" id="CHEBI:33019"/>
        <dbReference type="ChEBI" id="CHEBI:61557"/>
        <dbReference type="ChEBI" id="CHEBI:140395"/>
        <dbReference type="EC" id="2.7.7.48"/>
    </reaction>
</comment>
<comment type="subcellular location">
    <molecule>Viral genome-linked protein</molecule>
    <subcellularLocation>
        <location evidence="1">Host endoplasmic reticulum lumen</location>
    </subcellularLocation>
</comment>
<comment type="subcellular location">
    <molecule>Putative ATP-dependent helicase</molecule>
    <subcellularLocation>
        <location evidence="1">Host endoplasmic reticulum membrane</location>
        <topology evidence="1">Single-pass membrane protein</topology>
    </subcellularLocation>
</comment>
<comment type="PTM">
    <text evidence="1">Specific enzymatic cleavages by picornain 3C-like protease in vivo yield mature proteins. Picornain 3C-like protease is autocatalytically processed (By similarity).</text>
</comment>
<comment type="PTM">
    <text evidence="1">VPg is uridylylated by the polymerase and is covalently linked to the 5'-end of genomic RNA. This uridylylated form acts as a nucleotide-peptide primer for the polymerase (By similarity).</text>
</comment>
<evidence type="ECO:0000250" key="1"/>
<evidence type="ECO:0000255" key="2"/>
<evidence type="ECO:0000255" key="3">
    <source>
        <dbReference type="PROSITE-ProRule" id="PRU00539"/>
    </source>
</evidence>
<evidence type="ECO:0000255" key="4">
    <source>
        <dbReference type="PROSITE-ProRule" id="PRU00551"/>
    </source>
</evidence>
<evidence type="ECO:0000255" key="5">
    <source>
        <dbReference type="PROSITE-ProRule" id="PRU01222"/>
    </source>
</evidence>
<dbReference type="EC" id="3.6.4.-"/>
<dbReference type="EC" id="3.4.22.-"/>
<dbReference type="EC" id="2.7.7.48"/>
<dbReference type="EMBL" id="D00915">
    <property type="protein sequence ID" value="BAA00761.1"/>
    <property type="molecule type" value="Genomic_RNA"/>
</dbReference>
<dbReference type="PIR" id="JQ1373">
    <property type="entry name" value="GNVVGV"/>
</dbReference>
<dbReference type="RefSeq" id="NP_619689.1">
    <property type="nucleotide sequence ID" value="NC_003615.1"/>
</dbReference>
<dbReference type="SMR" id="P29149"/>
<dbReference type="MEROPS" id="C03.004"/>
<dbReference type="GeneID" id="1494095"/>
<dbReference type="KEGG" id="vg:1494095"/>
<dbReference type="Proteomes" id="UP000009160">
    <property type="component" value="Genome"/>
</dbReference>
<dbReference type="GO" id="GO:0044166">
    <property type="term" value="C:host cell endoplasmic reticulum lumen"/>
    <property type="evidence" value="ECO:0007669"/>
    <property type="project" value="UniProtKB-SubCell"/>
</dbReference>
<dbReference type="GO" id="GO:0044167">
    <property type="term" value="C:host cell endoplasmic reticulum membrane"/>
    <property type="evidence" value="ECO:0007669"/>
    <property type="project" value="UniProtKB-SubCell"/>
</dbReference>
<dbReference type="GO" id="GO:0016020">
    <property type="term" value="C:membrane"/>
    <property type="evidence" value="ECO:0007669"/>
    <property type="project" value="UniProtKB-KW"/>
</dbReference>
<dbReference type="GO" id="GO:0005524">
    <property type="term" value="F:ATP binding"/>
    <property type="evidence" value="ECO:0007669"/>
    <property type="project" value="UniProtKB-KW"/>
</dbReference>
<dbReference type="GO" id="GO:0004197">
    <property type="term" value="F:cysteine-type endopeptidase activity"/>
    <property type="evidence" value="ECO:0007669"/>
    <property type="project" value="InterPro"/>
</dbReference>
<dbReference type="GO" id="GO:0003723">
    <property type="term" value="F:RNA binding"/>
    <property type="evidence" value="ECO:0007669"/>
    <property type="project" value="UniProtKB-KW"/>
</dbReference>
<dbReference type="GO" id="GO:0003724">
    <property type="term" value="F:RNA helicase activity"/>
    <property type="evidence" value="ECO:0007669"/>
    <property type="project" value="InterPro"/>
</dbReference>
<dbReference type="GO" id="GO:0003968">
    <property type="term" value="F:RNA-directed RNA polymerase activity"/>
    <property type="evidence" value="ECO:0007669"/>
    <property type="project" value="UniProtKB-KW"/>
</dbReference>
<dbReference type="GO" id="GO:0006351">
    <property type="term" value="P:DNA-templated transcription"/>
    <property type="evidence" value="ECO:0007669"/>
    <property type="project" value="InterPro"/>
</dbReference>
<dbReference type="GO" id="GO:0006508">
    <property type="term" value="P:proteolysis"/>
    <property type="evidence" value="ECO:0007669"/>
    <property type="project" value="UniProtKB-KW"/>
</dbReference>
<dbReference type="GO" id="GO:0039694">
    <property type="term" value="P:viral RNA genome replication"/>
    <property type="evidence" value="ECO:0007669"/>
    <property type="project" value="InterPro"/>
</dbReference>
<dbReference type="Gene3D" id="1.20.960.20">
    <property type="match status" value="1"/>
</dbReference>
<dbReference type="Gene3D" id="3.30.70.270">
    <property type="match status" value="1"/>
</dbReference>
<dbReference type="InterPro" id="IPR043502">
    <property type="entry name" value="DNA/RNA_pol_sf"/>
</dbReference>
<dbReference type="InterPro" id="IPR000605">
    <property type="entry name" value="Helicase_SF3_ssDNA/RNA_vir"/>
</dbReference>
<dbReference type="InterPro" id="IPR014759">
    <property type="entry name" value="Helicase_SF3_ssRNA_vir"/>
</dbReference>
<dbReference type="InterPro" id="IPR044067">
    <property type="entry name" value="PCV_3C_PRO"/>
</dbReference>
<dbReference type="InterPro" id="IPR043128">
    <property type="entry name" value="Rev_trsase/Diguanyl_cyclase"/>
</dbReference>
<dbReference type="InterPro" id="IPR001205">
    <property type="entry name" value="RNA-dir_pol_C"/>
</dbReference>
<dbReference type="InterPro" id="IPR007094">
    <property type="entry name" value="RNA-dir_pol_PSvirus"/>
</dbReference>
<dbReference type="Pfam" id="PF00680">
    <property type="entry name" value="RdRP_1"/>
    <property type="match status" value="1"/>
</dbReference>
<dbReference type="Pfam" id="PF00910">
    <property type="entry name" value="RNA_helicase"/>
    <property type="match status" value="1"/>
</dbReference>
<dbReference type="SUPFAM" id="SSF56672">
    <property type="entry name" value="DNA/RNA polymerases"/>
    <property type="match status" value="1"/>
</dbReference>
<dbReference type="PROSITE" id="PS51874">
    <property type="entry name" value="PCV_3C_PRO"/>
    <property type="match status" value="1"/>
</dbReference>
<dbReference type="PROSITE" id="PS50507">
    <property type="entry name" value="RDRP_SSRNA_POS"/>
    <property type="match status" value="1"/>
</dbReference>
<dbReference type="PROSITE" id="PS51218">
    <property type="entry name" value="SF3_HELICASE_2"/>
    <property type="match status" value="1"/>
</dbReference>
<accession>P29149</accession>
<protein>
    <recommendedName>
        <fullName>RNA1 polyprotein</fullName>
    </recommendedName>
    <alternativeName>
        <fullName>P1</fullName>
    </alternativeName>
    <component>
        <recommendedName>
            <fullName>P1A protein</fullName>
            <shortName>1A</shortName>
        </recommendedName>
        <alternativeName>
            <fullName>Protease cofactor</fullName>
        </alternativeName>
    </component>
    <component>
        <recommendedName>
            <fullName>Putative ATP-dependent helicase</fullName>
            <ecNumber>3.6.4.-</ecNumber>
        </recommendedName>
        <alternativeName>
            <fullName>1B</fullName>
        </alternativeName>
        <alternativeName>
            <fullName>Membrane-binding protein</fullName>
        </alternativeName>
        <alternativeName>
            <fullName>NTP-binding protein</fullName>
            <shortName>NTB</shortName>
        </alternativeName>
    </component>
    <component>
        <recommendedName>
            <fullName>Viral genome-linked protein</fullName>
        </recommendedName>
        <alternativeName>
            <fullName>1C-VPg</fullName>
        </alternativeName>
    </component>
    <component>
        <recommendedName>
            <fullName>Picornain 3C-like protease</fullName>
            <shortName>3C-like protease</shortName>
            <ecNumber>3.4.22.-</ecNumber>
        </recommendedName>
        <alternativeName>
            <fullName>1D-PRO</fullName>
        </alternativeName>
    </component>
    <component>
        <recommendedName>
            <fullName>RNA-directed RNA polymerase</fullName>
            <ecNumber>2.7.7.48</ecNumber>
        </recommendedName>
        <alternativeName>
            <fullName>1E-POL</fullName>
        </alternativeName>
    </component>
</protein>
<reference key="1">
    <citation type="journal article" date="1991" name="J. Gen. Virol.">
        <title>Complete nucleotide sequence and genetic organization of grapevine fanleaf nepovirus RNA1.</title>
        <authorList>
            <person name="Ritzenthaler C."/>
            <person name="Viry M."/>
            <person name="Pinck M."/>
            <person name="Margis R."/>
            <person name="Fuchs M."/>
            <person name="Pinck L."/>
        </authorList>
    </citation>
    <scope>NUCLEOTIDE SEQUENCE [GENOMIC RNA]</scope>
    <source>
        <strain>F13</strain>
    </source>
</reference>
<reference key="2">
    <citation type="journal article" date="1991" name="FEBS Lett.">
        <title>Primary structure and location of the genome-linked protein (VPg) of grapevine fanleaf nepovirus.</title>
        <authorList>
            <person name="Pinck M."/>
            <person name="Reinbolt J."/>
            <person name="Loudes A.-M."/>
            <person name="Le Ret M."/>
            <person name="Pinck L."/>
        </authorList>
    </citation>
    <scope>PROTEIN SEQUENCE OF 1218-1241</scope>
</reference>
<feature type="chain" id="PRO_0000037045" description="P1A protein" evidence="2">
    <location>
        <begin position="1"/>
        <end position="568"/>
    </location>
</feature>
<feature type="chain" id="PRO_0000037046" description="Putative ATP-dependent helicase" evidence="2">
    <location>
        <begin position="569"/>
        <end position="1217"/>
    </location>
</feature>
<feature type="chain" id="PRO_0000037047" description="Viral genome-linked protein">
    <location>
        <begin position="1218"/>
        <end position="1241"/>
    </location>
</feature>
<feature type="chain" id="PRO_0000037048" description="Picornain 3C-like protease" evidence="2">
    <location>
        <begin position="1242"/>
        <end position="1461"/>
    </location>
</feature>
<feature type="chain" id="PRO_0000037049" description="RNA-directed RNA polymerase" evidence="2">
    <location>
        <begin position="1462"/>
        <end position="2284"/>
    </location>
</feature>
<feature type="topological domain" description="Cytoplasmic" evidence="2">
    <location>
        <begin position="569"/>
        <end position="1171"/>
    </location>
</feature>
<feature type="transmembrane region" description="Helical" evidence="2">
    <location>
        <begin position="1172"/>
        <end position="1192"/>
    </location>
</feature>
<feature type="topological domain" description="Lumenal" evidence="2">
    <location>
        <begin position="1193"/>
        <end position="1217"/>
    </location>
</feature>
<feature type="domain" description="SF3 helicase" evidence="4">
    <location>
        <begin position="751"/>
        <end position="919"/>
    </location>
</feature>
<feature type="domain" description="Peptidase C3" evidence="5">
    <location>
        <begin position="1243"/>
        <end position="1458"/>
    </location>
</feature>
<feature type="domain" description="RdRp catalytic" evidence="3">
    <location>
        <begin position="1728"/>
        <end position="1852"/>
    </location>
</feature>
<feature type="active site" description="For picornain 3C-like protease activity" evidence="5">
    <location>
        <position position="1284"/>
    </location>
</feature>
<feature type="active site" description="For picornain 3C-like protease activity" evidence="5">
    <location>
        <position position="1328"/>
    </location>
</feature>
<feature type="active site" description="For picornain 3C-like protease activity" evidence="5">
    <location>
        <position position="1420"/>
    </location>
</feature>
<feature type="binding site" evidence="4">
    <location>
        <begin position="781"/>
        <end position="788"/>
    </location>
    <ligand>
        <name>ATP</name>
        <dbReference type="ChEBI" id="CHEBI:30616"/>
    </ligand>
</feature>
<feature type="modified residue" description="O-(5'-phospho-RNA)-serine" evidence="1">
    <location>
        <position position="1218"/>
    </location>
</feature>
<name>POL1_GFLV</name>
<proteinExistence type="evidence at protein level"/>
<organismHost>
    <name type="scientific">Vitis rupestris</name>
    <dbReference type="NCBI Taxonomy" id="103352"/>
</organismHost>
<organismHost>
    <name type="scientific">Vitis vinifera</name>
    <name type="common">Grape</name>
    <dbReference type="NCBI Taxonomy" id="29760"/>
</organismHost>
<keyword id="KW-0067">ATP-binding</keyword>
<keyword id="KW-0191">Covalent protein-RNA linkage</keyword>
<keyword id="KW-0903">Direct protein sequencing</keyword>
<keyword id="KW-0347">Helicase</keyword>
<keyword id="KW-1038">Host endoplasmic reticulum</keyword>
<keyword id="KW-1043">Host membrane</keyword>
<keyword id="KW-0378">Hydrolase</keyword>
<keyword id="KW-0472">Membrane</keyword>
<keyword id="KW-0547">Nucleotide-binding</keyword>
<keyword id="KW-0548">Nucleotidyltransferase</keyword>
<keyword id="KW-0597">Phosphoprotein</keyword>
<keyword id="KW-0645">Protease</keyword>
<keyword id="KW-0694">RNA-binding</keyword>
<keyword id="KW-0696">RNA-directed RNA polymerase</keyword>
<keyword id="KW-0788">Thiol protease</keyword>
<keyword id="KW-0808">Transferase</keyword>
<keyword id="KW-0812">Transmembrane</keyword>
<keyword id="KW-1133">Transmembrane helix</keyword>
<keyword id="KW-0693">Viral RNA replication</keyword>
<organism>
    <name type="scientific">Grapevine fanleaf virus</name>
    <name type="common">GFLV</name>
    <dbReference type="NCBI Taxonomy" id="12274"/>
    <lineage>
        <taxon>Viruses</taxon>
        <taxon>Riboviria</taxon>
        <taxon>Orthornavirae</taxon>
        <taxon>Pisuviricota</taxon>
        <taxon>Pisoniviricetes</taxon>
        <taxon>Picornavirales</taxon>
        <taxon>Secoviridae</taxon>
        <taxon>Comovirinae</taxon>
        <taxon>Nepovirus</taxon>
        <taxon>Nepovirus foliumflabelli</taxon>
    </lineage>
</organism>
<sequence>MWQVPEGSQCCCTGKSFSNAEAKELRYVCSCWMSTRLVKAEAPPQQSRKSGIAPTPLKSKGTIQVSLPKATGVKPSIHKSKGASVAPAPLLKQRCEVVVQYGPPADIELVYPPLVREEEKSSNIVVLPPTQKVEVRVPVCCAPKWMVAIPKPPVKLAPKASKLRFPKGAVAYNGVNFIDTKGKVVLSEGAKRILRGIRVAAKQRLRAARRSAACKKVRAKRALAEFEAIVQSERLDQLKTGFQVVLPAPKMSCSLKEAAPSTTSVVVVKKRKLPRLPKILPEQDFSCLEGFDWGEKSHPVEVDIEDDWILVEKPVLKRQAVQTAQGRATEALTRFAATSGFSLGAHQKVEDFASSGEAEYLMAGEFADLCLLSLVYNDAPTLSATIEELRDSKDFLEAIELLKLELAEIPTDSTTCAPFKQWASAAKQMAKGVGTMVGDFTRAAGAAVVISFDMAVEFLQDKALKFCKRIFDVTMAPYLQHLASAHSILKKIWEKLSEWMESLKSKASLALEVMRQHAIFALGAMVIGGVVVLVEKVLIAAKIIPNCGIILGAFLTLFFASLGLTALECTAEEIFRMHACCKSAIYSMYSVAEPTMADEGESHTMGATQGLDNAIQALTRVGQSMISFKLGSFSYYAKIAQGFDQLARGKRAIGELTSWLIDLVGSIYSQVSGQESTFFDELSTIVCLDVRAWLLKSKRVRLQVETMAIGDRITLDTIAKLLEEGHKILVTAAGVPRKTSADFTMCIKEEVSKLEEVHARTACAGINEGMRAFPFWVYIFGASQSGKTTIANSIIIPALLEEMNLPKSSVYSRPKTGGFWSGYARQACVKVDDFYAIEQTPSLASSMIDVVNSEPYPLDMAYIHEKGMSMDSPLVVTTANTAVPPTNSQVVDLPSFYNRRAAVLEVRRKDGSFFTPRAYDSCIEVRFMHNKCPYVDSAGVPQGPAVNTPMDEGWITPSEAVAVLKNLLGEHILAEEAKLLEYRERIGNDHPIYNAAKEFIGNMHYPGQWLTAEQKSTYGIKDDGFSFLAVDGKIYKYNVLGKLNPCESEPPHPNVIPWLEKKTLEIVHWDVHKHIATGPRNALVACFLQGLVQGQSKVESVERMGKDSSPEQQNFFKRLSLSERIYLRLCQIRIDNIQKEELAGSGRGPMAILRECLMKSKQVVVENYSLLLTLVAILLLISAAYTLLSTVVALAGCSSFAGGMVAVTAVNNASIPCSEPRLEERYSPRNRFVSRISKIRGEGPSKGQGEHEELVTELYYYCDGVKKLISTCWFKGRSLLMTRHQALAVPIGNEIEVIYADGTTKKLVWPGRQEDGNCKGFVEFPENELVVFEHPHLLTLPIKYEKYFVDDADRQISPNVAVKCCVARLEDGIPQFHFWSKYATARSEVHTLKDEGGGNVYQNKIRRYIVYAHEAKKYDCGALAVAVIQGIPKVIAMLVSGNRGVTYSSVIPNYSSSFIRGEVPYVPEDGLVSRGYRKVGYLHASDAPHVPSKTSFMKVPDELCFPYPDPKQPAILSAEDERLKGTIHEGYTPLRDGMKKFAEPMYLLEEKLLDEVAGDMVQTWYDPGEFLEDISLDQAINGDMDEEYFDPLVMDTSEGYPDVLDRKPGEKGKARFFVGEPGNRAFVAGCNPEKAYYQLEEDSKTKIPSLVSIETPKDERLKRSKIDTPGTRLFSVLPLAYNLLLRVKFLSFSRLLMKKRGHLPCQVGINPYSREWTDLYHRLGELSDVGYNCDYKAFDGLITEQILSTIADMINAGYRDPVGNRQRKNLLLAICGRLSICGNQVYATEAGIPSGCALTVVLNSIFKELLMRYCFKKIVPPVYKECFDRCVVLITYGDDNVFTVAQSVMQYFTGDALKMQMAKLGVTITDGKDKSLSTIPARPLLELEFLKRGFVRSSGGMINAPLEKLSIMSSLVYIRSDGSDMLQKLLDNVNTALVELYLHGDRTYFESVRAFYFEKLPPGAYKELTTWFQAESFHECQKSGESGYKPQGLIEISHGAAFASFTQQAGTELEKHDICPGLSIAGTKYIATENEIVLSLSSVLPGDRNVFKLDLPCGDGIGRLPSKCSILNLRKPGLVMRLCKRAQDEKKTLVIRDERPYIGAWAVACICGESFGFGQQSVLALYANLLGPNQRNGLASYFSDFESPIHIKKVHAKTNSYEGGEALKEIFTFCETIFYEATEMDTRKVMLQNQPDVYPSISLVGGVCFPNEGGEPGAMYSETDVTMAREVQGVYVSEACVKCCRRCVGVATRVVTDTQLFGNNLLKTHLKALRKIQNHTCLRK</sequence>